<evidence type="ECO:0000255" key="1">
    <source>
        <dbReference type="HAMAP-Rule" id="MF_00057"/>
    </source>
</evidence>
<gene>
    <name evidence="1" type="primary">kdsB</name>
    <name type="ordered locus">BT_0745</name>
</gene>
<organism>
    <name type="scientific">Bacteroides thetaiotaomicron (strain ATCC 29148 / DSM 2079 / JCM 5827 / CCUG 10774 / NCTC 10582 / VPI-5482 / E50)</name>
    <dbReference type="NCBI Taxonomy" id="226186"/>
    <lineage>
        <taxon>Bacteria</taxon>
        <taxon>Pseudomonadati</taxon>
        <taxon>Bacteroidota</taxon>
        <taxon>Bacteroidia</taxon>
        <taxon>Bacteroidales</taxon>
        <taxon>Bacteroidaceae</taxon>
        <taxon>Bacteroides</taxon>
    </lineage>
</organism>
<sequence length="250" mass="27994">MKFLGIIPARYASTRFPAKPLAMLGGKTVIQRVYEQVAGILDDAYVATDDERIEAAVKAFGGKVVMTSIDHKSGTDRCYEACTKIGGDFDVVVNIQGDEPFIQPSQLNAVKACFEDPTTQIATLVKPFTADEPFAVLENVNSPKVVLNKNWNALYFSRSIIPFQRNADKEDWLKGHTYYKHIGLYAYRTEVLKEITALPQSSLELAESLEQLRWLENGYKIKVGISDVETIGIDTPQDLKHAEEFLKNRS</sequence>
<dbReference type="EC" id="2.7.7.38" evidence="1"/>
<dbReference type="EMBL" id="AE015928">
    <property type="protein sequence ID" value="AAO75852.1"/>
    <property type="molecule type" value="Genomic_DNA"/>
</dbReference>
<dbReference type="RefSeq" id="NP_809658.1">
    <property type="nucleotide sequence ID" value="NC_004663.1"/>
</dbReference>
<dbReference type="RefSeq" id="WP_008761419.1">
    <property type="nucleotide sequence ID" value="NZ_UYXG01000002.1"/>
</dbReference>
<dbReference type="SMR" id="Q8A9S0"/>
<dbReference type="FunCoup" id="Q8A9S0">
    <property type="interactions" value="403"/>
</dbReference>
<dbReference type="STRING" id="226186.BT_0745"/>
<dbReference type="PaxDb" id="226186-BT_0745"/>
<dbReference type="EnsemblBacteria" id="AAO75852">
    <property type="protein sequence ID" value="AAO75852"/>
    <property type="gene ID" value="BT_0745"/>
</dbReference>
<dbReference type="GeneID" id="60926713"/>
<dbReference type="KEGG" id="bth:BT_0745"/>
<dbReference type="PATRIC" id="fig|226186.12.peg.760"/>
<dbReference type="eggNOG" id="COG1212">
    <property type="taxonomic scope" value="Bacteria"/>
</dbReference>
<dbReference type="HOGENOM" id="CLU_065038_0_1_10"/>
<dbReference type="InParanoid" id="Q8A9S0"/>
<dbReference type="OrthoDB" id="9815559at2"/>
<dbReference type="UniPathway" id="UPA00030"/>
<dbReference type="UniPathway" id="UPA00358">
    <property type="reaction ID" value="UER00476"/>
</dbReference>
<dbReference type="Proteomes" id="UP000001414">
    <property type="component" value="Chromosome"/>
</dbReference>
<dbReference type="GO" id="GO:0005829">
    <property type="term" value="C:cytosol"/>
    <property type="evidence" value="ECO:0000318"/>
    <property type="project" value="GO_Central"/>
</dbReference>
<dbReference type="GO" id="GO:0008690">
    <property type="term" value="F:3-deoxy-manno-octulosonate cytidylyltransferase activity"/>
    <property type="evidence" value="ECO:0000318"/>
    <property type="project" value="GO_Central"/>
</dbReference>
<dbReference type="GO" id="GO:0033468">
    <property type="term" value="P:CMP-keto-3-deoxy-D-manno-octulosonic acid biosynthetic process"/>
    <property type="evidence" value="ECO:0007669"/>
    <property type="project" value="UniProtKB-UniRule"/>
</dbReference>
<dbReference type="GO" id="GO:0009103">
    <property type="term" value="P:lipopolysaccharide biosynthetic process"/>
    <property type="evidence" value="ECO:0007669"/>
    <property type="project" value="UniProtKB-UniRule"/>
</dbReference>
<dbReference type="CDD" id="cd02517">
    <property type="entry name" value="CMP-KDO-Synthetase"/>
    <property type="match status" value="1"/>
</dbReference>
<dbReference type="FunFam" id="3.90.550.10:FF:000154">
    <property type="entry name" value="3-deoxy-manno-octulosonate cytidylyltransferase"/>
    <property type="match status" value="1"/>
</dbReference>
<dbReference type="Gene3D" id="3.90.550.10">
    <property type="entry name" value="Spore Coat Polysaccharide Biosynthesis Protein SpsA, Chain A"/>
    <property type="match status" value="1"/>
</dbReference>
<dbReference type="HAMAP" id="MF_00057">
    <property type="entry name" value="KdsB"/>
    <property type="match status" value="1"/>
</dbReference>
<dbReference type="InterPro" id="IPR003329">
    <property type="entry name" value="Cytidylyl_trans"/>
</dbReference>
<dbReference type="InterPro" id="IPR004528">
    <property type="entry name" value="KdsB"/>
</dbReference>
<dbReference type="InterPro" id="IPR029044">
    <property type="entry name" value="Nucleotide-diphossugar_trans"/>
</dbReference>
<dbReference type="NCBIfam" id="TIGR00466">
    <property type="entry name" value="kdsB"/>
    <property type="match status" value="1"/>
</dbReference>
<dbReference type="NCBIfam" id="NF003950">
    <property type="entry name" value="PRK05450.1-3"/>
    <property type="match status" value="1"/>
</dbReference>
<dbReference type="NCBIfam" id="NF003952">
    <property type="entry name" value="PRK05450.1-5"/>
    <property type="match status" value="1"/>
</dbReference>
<dbReference type="NCBIfam" id="NF009905">
    <property type="entry name" value="PRK13368.1"/>
    <property type="match status" value="1"/>
</dbReference>
<dbReference type="PANTHER" id="PTHR42866">
    <property type="entry name" value="3-DEOXY-MANNO-OCTULOSONATE CYTIDYLYLTRANSFERASE"/>
    <property type="match status" value="1"/>
</dbReference>
<dbReference type="PANTHER" id="PTHR42866:SF2">
    <property type="entry name" value="3-DEOXY-MANNO-OCTULOSONATE CYTIDYLYLTRANSFERASE, MITOCHONDRIAL"/>
    <property type="match status" value="1"/>
</dbReference>
<dbReference type="Pfam" id="PF02348">
    <property type="entry name" value="CTP_transf_3"/>
    <property type="match status" value="1"/>
</dbReference>
<dbReference type="SUPFAM" id="SSF53448">
    <property type="entry name" value="Nucleotide-diphospho-sugar transferases"/>
    <property type="match status" value="1"/>
</dbReference>
<accession>Q8A9S0</accession>
<name>KDSB_BACTN</name>
<feature type="chain" id="PRO_0000369998" description="3-deoxy-manno-octulosonate cytidylyltransferase">
    <location>
        <begin position="1"/>
        <end position="250"/>
    </location>
</feature>
<reference key="1">
    <citation type="journal article" date="2003" name="Science">
        <title>A genomic view of the human-Bacteroides thetaiotaomicron symbiosis.</title>
        <authorList>
            <person name="Xu J."/>
            <person name="Bjursell M.K."/>
            <person name="Himrod J."/>
            <person name="Deng S."/>
            <person name="Carmichael L.K."/>
            <person name="Chiang H.C."/>
            <person name="Hooper L.V."/>
            <person name="Gordon J.I."/>
        </authorList>
    </citation>
    <scope>NUCLEOTIDE SEQUENCE [LARGE SCALE GENOMIC DNA]</scope>
    <source>
        <strain>ATCC 29148 / DSM 2079 / JCM 5827 / CCUG 10774 / NCTC 10582 / VPI-5482 / E50</strain>
    </source>
</reference>
<protein>
    <recommendedName>
        <fullName evidence="1">3-deoxy-manno-octulosonate cytidylyltransferase</fullName>
        <ecNumber evidence="1">2.7.7.38</ecNumber>
    </recommendedName>
    <alternativeName>
        <fullName evidence="1">CMP-2-keto-3-deoxyoctulosonic acid synthase</fullName>
        <shortName evidence="1">CKS</shortName>
        <shortName evidence="1">CMP-KDO synthase</shortName>
    </alternativeName>
</protein>
<proteinExistence type="inferred from homology"/>
<comment type="function">
    <text evidence="1">Activates KDO (a required 8-carbon sugar) for incorporation into bacterial lipopolysaccharide in Gram-negative bacteria.</text>
</comment>
<comment type="catalytic activity">
    <reaction evidence="1">
        <text>3-deoxy-alpha-D-manno-oct-2-ulosonate + CTP = CMP-3-deoxy-beta-D-manno-octulosonate + diphosphate</text>
        <dbReference type="Rhea" id="RHEA:23448"/>
        <dbReference type="ChEBI" id="CHEBI:33019"/>
        <dbReference type="ChEBI" id="CHEBI:37563"/>
        <dbReference type="ChEBI" id="CHEBI:85986"/>
        <dbReference type="ChEBI" id="CHEBI:85987"/>
        <dbReference type="EC" id="2.7.7.38"/>
    </reaction>
</comment>
<comment type="pathway">
    <text evidence="1">Nucleotide-sugar biosynthesis; CMP-3-deoxy-D-manno-octulosonate biosynthesis; CMP-3-deoxy-D-manno-octulosonate from 3-deoxy-D-manno-octulosonate and CTP: step 1/1.</text>
</comment>
<comment type="pathway">
    <text evidence="1">Bacterial outer membrane biogenesis; lipopolysaccharide biosynthesis.</text>
</comment>
<comment type="subcellular location">
    <subcellularLocation>
        <location evidence="1">Cytoplasm</location>
    </subcellularLocation>
</comment>
<comment type="similarity">
    <text evidence="1">Belongs to the KdsB family.</text>
</comment>
<keyword id="KW-0963">Cytoplasm</keyword>
<keyword id="KW-0448">Lipopolysaccharide biosynthesis</keyword>
<keyword id="KW-0548">Nucleotidyltransferase</keyword>
<keyword id="KW-1185">Reference proteome</keyword>
<keyword id="KW-0808">Transferase</keyword>